<organism evidence="7">
    <name type="scientific">Arabidopsis thaliana</name>
    <name type="common">Mouse-ear cress</name>
    <dbReference type="NCBI Taxonomy" id="3702"/>
    <lineage>
        <taxon>Eukaryota</taxon>
        <taxon>Viridiplantae</taxon>
        <taxon>Streptophyta</taxon>
        <taxon>Embryophyta</taxon>
        <taxon>Tracheophyta</taxon>
        <taxon>Spermatophyta</taxon>
        <taxon>Magnoliopsida</taxon>
        <taxon>eudicotyledons</taxon>
        <taxon>Gunneridae</taxon>
        <taxon>Pentapetalae</taxon>
        <taxon>rosids</taxon>
        <taxon>malvids</taxon>
        <taxon>Brassicales</taxon>
        <taxon>Brassicaceae</taxon>
        <taxon>Camelineae</taxon>
        <taxon>Arabidopsis</taxon>
    </lineage>
</organism>
<keyword id="KW-0009">Actin-binding</keyword>
<keyword id="KW-0963">Cytoplasm</keyword>
<keyword id="KW-0206">Cytoskeleton</keyword>
<keyword id="KW-0440">LIM domain</keyword>
<keyword id="KW-0479">Metal-binding</keyword>
<keyword id="KW-1185">Reference proteome</keyword>
<keyword id="KW-0677">Repeat</keyword>
<keyword id="KW-0862">Zinc</keyword>
<protein>
    <recommendedName>
        <fullName evidence="5">LIM domain-containing protein PLIM2c</fullName>
    </recommendedName>
    <alternativeName>
        <fullName evidence="5">Pollen-expressed LIM protein 2C</fullName>
    </alternativeName>
</protein>
<reference key="1">
    <citation type="journal article" date="2000" name="Nature">
        <title>Sequence and analysis of chromosome 3 of the plant Arabidopsis thaliana.</title>
        <authorList>
            <person name="Salanoubat M."/>
            <person name="Lemcke K."/>
            <person name="Rieger M."/>
            <person name="Ansorge W."/>
            <person name="Unseld M."/>
            <person name="Fartmann B."/>
            <person name="Valle G."/>
            <person name="Bloecker H."/>
            <person name="Perez-Alonso M."/>
            <person name="Obermaier B."/>
            <person name="Delseny M."/>
            <person name="Boutry M."/>
            <person name="Grivell L.A."/>
            <person name="Mache R."/>
            <person name="Puigdomenech P."/>
            <person name="De Simone V."/>
            <person name="Choisne N."/>
            <person name="Artiguenave F."/>
            <person name="Robert C."/>
            <person name="Brottier P."/>
            <person name="Wincker P."/>
            <person name="Cattolico L."/>
            <person name="Weissenbach J."/>
            <person name="Saurin W."/>
            <person name="Quetier F."/>
            <person name="Schaefer M."/>
            <person name="Mueller-Auer S."/>
            <person name="Gabel C."/>
            <person name="Fuchs M."/>
            <person name="Benes V."/>
            <person name="Wurmbach E."/>
            <person name="Drzonek H."/>
            <person name="Erfle H."/>
            <person name="Jordan N."/>
            <person name="Bangert S."/>
            <person name="Wiedelmann R."/>
            <person name="Kranz H."/>
            <person name="Voss H."/>
            <person name="Holland R."/>
            <person name="Brandt P."/>
            <person name="Nyakatura G."/>
            <person name="Vezzi A."/>
            <person name="D'Angelo M."/>
            <person name="Pallavicini A."/>
            <person name="Toppo S."/>
            <person name="Simionati B."/>
            <person name="Conrad A."/>
            <person name="Hornischer K."/>
            <person name="Kauer G."/>
            <person name="Loehnert T.-H."/>
            <person name="Nordsiek G."/>
            <person name="Reichelt J."/>
            <person name="Scharfe M."/>
            <person name="Schoen O."/>
            <person name="Bargues M."/>
            <person name="Terol J."/>
            <person name="Climent J."/>
            <person name="Navarro P."/>
            <person name="Collado C."/>
            <person name="Perez-Perez A."/>
            <person name="Ottenwaelder B."/>
            <person name="Duchemin D."/>
            <person name="Cooke R."/>
            <person name="Laudie M."/>
            <person name="Berger-Llauro C."/>
            <person name="Purnelle B."/>
            <person name="Masuy D."/>
            <person name="de Haan M."/>
            <person name="Maarse A.C."/>
            <person name="Alcaraz J.-P."/>
            <person name="Cottet A."/>
            <person name="Casacuberta E."/>
            <person name="Monfort A."/>
            <person name="Argiriou A."/>
            <person name="Flores M."/>
            <person name="Liguori R."/>
            <person name="Vitale D."/>
            <person name="Mannhaupt G."/>
            <person name="Haase D."/>
            <person name="Schoof H."/>
            <person name="Rudd S."/>
            <person name="Zaccaria P."/>
            <person name="Mewes H.-W."/>
            <person name="Mayer K.F.X."/>
            <person name="Kaul S."/>
            <person name="Town C.D."/>
            <person name="Koo H.L."/>
            <person name="Tallon L.J."/>
            <person name="Jenkins J."/>
            <person name="Rooney T."/>
            <person name="Rizzo M."/>
            <person name="Walts A."/>
            <person name="Utterback T."/>
            <person name="Fujii C.Y."/>
            <person name="Shea T.P."/>
            <person name="Creasy T.H."/>
            <person name="Haas B."/>
            <person name="Maiti R."/>
            <person name="Wu D."/>
            <person name="Peterson J."/>
            <person name="Van Aken S."/>
            <person name="Pai G."/>
            <person name="Militscher J."/>
            <person name="Sellers P."/>
            <person name="Gill J.E."/>
            <person name="Feldblyum T.V."/>
            <person name="Preuss D."/>
            <person name="Lin X."/>
            <person name="Nierman W.C."/>
            <person name="Salzberg S.L."/>
            <person name="White O."/>
            <person name="Venter J.C."/>
            <person name="Fraser C.M."/>
            <person name="Kaneko T."/>
            <person name="Nakamura Y."/>
            <person name="Sato S."/>
            <person name="Kato T."/>
            <person name="Asamizu E."/>
            <person name="Sasamoto S."/>
            <person name="Kimura T."/>
            <person name="Idesawa K."/>
            <person name="Kawashima K."/>
            <person name="Kishida Y."/>
            <person name="Kiyokawa C."/>
            <person name="Kohara M."/>
            <person name="Matsumoto M."/>
            <person name="Matsuno A."/>
            <person name="Muraki A."/>
            <person name="Nakayama S."/>
            <person name="Nakazaki N."/>
            <person name="Shinpo S."/>
            <person name="Takeuchi C."/>
            <person name="Wada T."/>
            <person name="Watanabe A."/>
            <person name="Yamada M."/>
            <person name="Yasuda M."/>
            <person name="Tabata S."/>
        </authorList>
    </citation>
    <scope>NUCLEOTIDE SEQUENCE [LARGE SCALE GENOMIC DNA]</scope>
    <source>
        <strain>cv. Columbia</strain>
    </source>
</reference>
<reference key="2">
    <citation type="journal article" date="2017" name="Plant J.">
        <title>Araport11: a complete reannotation of the Arabidopsis thaliana reference genome.</title>
        <authorList>
            <person name="Cheng C.Y."/>
            <person name="Krishnakumar V."/>
            <person name="Chan A.P."/>
            <person name="Thibaud-Nissen F."/>
            <person name="Schobel S."/>
            <person name="Town C.D."/>
        </authorList>
    </citation>
    <scope>GENOME REANNOTATION</scope>
    <source>
        <strain>cv. Columbia</strain>
    </source>
</reference>
<reference key="3">
    <citation type="submission" date="2005-05" db="EMBL/GenBank/DDBJ databases">
        <title>Arabidopsis cDNA clones.</title>
        <authorList>
            <person name="Shinn P."/>
            <person name="Chen H."/>
            <person name="Cheuk R."/>
            <person name="Kim C.J."/>
            <person name="Ecker J.R."/>
        </authorList>
    </citation>
    <scope>NUCLEOTIDE SEQUENCE [LARGE SCALE MRNA]</scope>
</reference>
<reference key="4">
    <citation type="submission" date="2009-03" db="EMBL/GenBank/DDBJ databases">
        <title>ORF cloning and analysis of Arabidopsis TRANSCRIPTION FACTOR GENES.</title>
        <authorList>
            <person name="Fujita M."/>
            <person name="Mizukado S."/>
            <person name="Seki M."/>
            <person name="Shinozaki K."/>
            <person name="Mitsuda N."/>
            <person name="Takiguchi Y."/>
            <person name="Takagi M."/>
        </authorList>
    </citation>
    <scope>NUCLEOTIDE SEQUENCE [LARGE SCALE MRNA]</scope>
</reference>
<reference key="5">
    <citation type="journal article" date="2007" name="DNA Res.">
        <title>Genome-wide analysis of LIM gene family in Populus trichocarpa, Arabidopsis thaliana, and Oryza sativa.</title>
        <authorList>
            <person name="Arnaud D."/>
            <person name="Dejardin A."/>
            <person name="Leple J.C."/>
            <person name="Lesage-Descauses M.C."/>
            <person name="Pilate G."/>
        </authorList>
    </citation>
    <scope>GENE FAMILY</scope>
    <scope>NOMENCLATURE</scope>
</reference>
<reference key="6">
    <citation type="journal article" date="2010" name="Plant Cell">
        <title>Arabidopsis LIM proteins: a family of actin bundlers with distinct expression patterns and modes of regulation.</title>
        <authorList>
            <person name="Papuga J."/>
            <person name="Hoffmann C."/>
            <person name="Dieterle M."/>
            <person name="Moes D."/>
            <person name="Moreau F."/>
            <person name="Tholl S."/>
            <person name="Steinmetz A."/>
            <person name="Thomas C."/>
        </authorList>
    </citation>
    <scope>FUNCTION</scope>
    <scope>TISSUE SPECIFICITY</scope>
    <scope>SUBCELLULAR LOCATION</scope>
    <scope>INTERACTION WITH F-ACTIN</scope>
    <scope>DOMAIN</scope>
</reference>
<accession>Q500W4</accession>
<accession>Q9M2E1</accession>
<name>PLI2C_ARATH</name>
<dbReference type="EMBL" id="AL137898">
    <property type="protein sequence ID" value="CAB71053.1"/>
    <property type="status" value="ALT_SEQ"/>
    <property type="molecule type" value="Genomic_DNA"/>
</dbReference>
<dbReference type="EMBL" id="CP002686">
    <property type="protein sequence ID" value="AEE80176.1"/>
    <property type="molecule type" value="Genomic_DNA"/>
</dbReference>
<dbReference type="EMBL" id="BT022103">
    <property type="protein sequence ID" value="AAY34164.1"/>
    <property type="molecule type" value="mRNA"/>
</dbReference>
<dbReference type="EMBL" id="AB493659">
    <property type="protein sequence ID" value="BAH30497.1"/>
    <property type="molecule type" value="mRNA"/>
</dbReference>
<dbReference type="PIR" id="T47915">
    <property type="entry name" value="T47915"/>
</dbReference>
<dbReference type="RefSeq" id="NP_191682.2">
    <property type="nucleotide sequence ID" value="NM_115987.4"/>
</dbReference>
<dbReference type="BioGRID" id="10609">
    <property type="interactions" value="2"/>
</dbReference>
<dbReference type="FunCoup" id="Q500W4">
    <property type="interactions" value="297"/>
</dbReference>
<dbReference type="IntAct" id="Q500W4">
    <property type="interactions" value="2"/>
</dbReference>
<dbReference type="STRING" id="3702.Q500W4"/>
<dbReference type="PaxDb" id="3702-AT3G61230.1"/>
<dbReference type="ProteomicsDB" id="234768"/>
<dbReference type="EnsemblPlants" id="AT3G61230.1">
    <property type="protein sequence ID" value="AT3G61230.1"/>
    <property type="gene ID" value="AT3G61230"/>
</dbReference>
<dbReference type="GeneID" id="825295"/>
<dbReference type="Gramene" id="AT3G61230.1">
    <property type="protein sequence ID" value="AT3G61230.1"/>
    <property type="gene ID" value="AT3G61230"/>
</dbReference>
<dbReference type="KEGG" id="ath:AT3G61230"/>
<dbReference type="Araport" id="AT3G61230"/>
<dbReference type="TAIR" id="AT3G61230">
    <property type="gene designation" value="PLIM2C"/>
</dbReference>
<dbReference type="eggNOG" id="KOG1700">
    <property type="taxonomic scope" value="Eukaryota"/>
</dbReference>
<dbReference type="HOGENOM" id="CLU_026811_1_0_1"/>
<dbReference type="InParanoid" id="Q500W4"/>
<dbReference type="OMA" id="PRHWPKV"/>
<dbReference type="OrthoDB" id="6129702at2759"/>
<dbReference type="PhylomeDB" id="Q500W4"/>
<dbReference type="PRO" id="PR:Q500W4"/>
<dbReference type="Proteomes" id="UP000006548">
    <property type="component" value="Chromosome 3"/>
</dbReference>
<dbReference type="ExpressionAtlas" id="Q500W4">
    <property type="expression patterns" value="baseline and differential"/>
</dbReference>
<dbReference type="GO" id="GO:0005737">
    <property type="term" value="C:cytoplasm"/>
    <property type="evidence" value="ECO:0007669"/>
    <property type="project" value="UniProtKB-KW"/>
</dbReference>
<dbReference type="GO" id="GO:0005856">
    <property type="term" value="C:cytoskeleton"/>
    <property type="evidence" value="ECO:0007669"/>
    <property type="project" value="UniProtKB-SubCell"/>
</dbReference>
<dbReference type="GO" id="GO:0051015">
    <property type="term" value="F:actin filament binding"/>
    <property type="evidence" value="ECO:0000314"/>
    <property type="project" value="TAIR"/>
</dbReference>
<dbReference type="GO" id="GO:0046872">
    <property type="term" value="F:metal ion binding"/>
    <property type="evidence" value="ECO:0007669"/>
    <property type="project" value="UniProtKB-KW"/>
</dbReference>
<dbReference type="GO" id="GO:0051017">
    <property type="term" value="P:actin filament bundle assembly"/>
    <property type="evidence" value="ECO:0000314"/>
    <property type="project" value="TAIR"/>
</dbReference>
<dbReference type="CDD" id="cd09440">
    <property type="entry name" value="LIM1_SF3"/>
    <property type="match status" value="1"/>
</dbReference>
<dbReference type="FunFam" id="2.10.110.10:FF:000002">
    <property type="entry name" value="LIM domain and actin-binding 1"/>
    <property type="match status" value="2"/>
</dbReference>
<dbReference type="Gene3D" id="2.10.110.10">
    <property type="entry name" value="Cysteine Rich Protein"/>
    <property type="match status" value="2"/>
</dbReference>
<dbReference type="InterPro" id="IPR001781">
    <property type="entry name" value="Znf_LIM"/>
</dbReference>
<dbReference type="PANTHER" id="PTHR24206">
    <property type="entry name" value="OS06G0237300 PROTEIN"/>
    <property type="match status" value="1"/>
</dbReference>
<dbReference type="Pfam" id="PF00412">
    <property type="entry name" value="LIM"/>
    <property type="match status" value="2"/>
</dbReference>
<dbReference type="SMART" id="SM00132">
    <property type="entry name" value="LIM"/>
    <property type="match status" value="2"/>
</dbReference>
<dbReference type="SUPFAM" id="SSF57716">
    <property type="entry name" value="Glucocorticoid receptor-like (DNA-binding domain)"/>
    <property type="match status" value="4"/>
</dbReference>
<dbReference type="PROSITE" id="PS00478">
    <property type="entry name" value="LIM_DOMAIN_1"/>
    <property type="match status" value="1"/>
</dbReference>
<dbReference type="PROSITE" id="PS50023">
    <property type="entry name" value="LIM_DOMAIN_2"/>
    <property type="match status" value="2"/>
</dbReference>
<gene>
    <name evidence="4" type="primary">PLIM2C</name>
    <name evidence="6" type="ordered locus">At3g61230</name>
    <name evidence="8" type="ORF">T20K12.130</name>
</gene>
<proteinExistence type="evidence at protein level"/>
<comment type="function">
    <text evidence="3">Binds to actin filaments and promotes cross-linking into thick bundles. Has an actin-stabilizing activity. Associates predominantly with long and dynamic actin bundles in the shank of growing pollen tubes. The actin regulatory activities are inhibited by pH &gt; 6.8 and/or high [Ca(2+)].</text>
</comment>
<comment type="subunit">
    <text evidence="3">Interacts with F-actin.</text>
</comment>
<comment type="subcellular location">
    <subcellularLocation>
        <location evidence="3">Cytoplasm</location>
        <location evidence="3">Cytoskeleton</location>
    </subcellularLocation>
</comment>
<comment type="tissue specificity">
    <text evidence="3">Exclusively expressed in pollen grains.</text>
</comment>
<comment type="domain">
    <text evidence="3">The C-terminal domain (159-213) is required for the ability to respond to pH and calcium variations.</text>
</comment>
<comment type="miscellaneous">
    <text evidence="3">Cross-links actin with a constant of dissociation of 1.5 uM.</text>
</comment>
<comment type="sequence caution">
    <conflict type="erroneous gene model prediction">
        <sequence resource="EMBL-CDS" id="CAB71053"/>
    </conflict>
</comment>
<evidence type="ECO:0000255" key="1">
    <source>
        <dbReference type="PROSITE-ProRule" id="PRU00125"/>
    </source>
</evidence>
<evidence type="ECO:0000256" key="2">
    <source>
        <dbReference type="SAM" id="MobiDB-lite"/>
    </source>
</evidence>
<evidence type="ECO:0000269" key="3">
    <source>
    </source>
</evidence>
<evidence type="ECO:0000303" key="4">
    <source>
    </source>
</evidence>
<evidence type="ECO:0000305" key="5"/>
<evidence type="ECO:0000312" key="6">
    <source>
        <dbReference type="Araport" id="AT3G61230"/>
    </source>
</evidence>
<evidence type="ECO:0000312" key="7">
    <source>
        <dbReference type="EMBL" id="AAY34164.1"/>
    </source>
</evidence>
<evidence type="ECO:0000312" key="8">
    <source>
        <dbReference type="EMBL" id="CAB71053.1"/>
    </source>
</evidence>
<sequence>MAAFTGTTDKCKACDKTVYVMDLMTLEGMPYHKSCFRCSHCNGTLVICNYSSMDGVLYCKTHFEQLFKESGNFSKNFQTAGKTEKSNDATKAPNRLSSFFSGTQDKCAACKKTVYPLEKMTMEGESYHKTCFRCAHSGCPLTHSSYAALDGVLYCKVHFSQLFLEKGNYNHVLQAAANHRRSTAEEDKTEPKEDEANPTEEETSDAAAEEHES</sequence>
<feature type="chain" id="PRO_0000430597" description="LIM domain-containing protein PLIM2c">
    <location>
        <begin position="1"/>
        <end position="213"/>
    </location>
</feature>
<feature type="domain" description="LIM zinc-binding 1" evidence="1">
    <location>
        <begin position="9"/>
        <end position="69"/>
    </location>
</feature>
<feature type="domain" description="LIM zinc-binding 2" evidence="1">
    <location>
        <begin position="105"/>
        <end position="165"/>
    </location>
</feature>
<feature type="region of interest" description="Disordered" evidence="2">
    <location>
        <begin position="177"/>
        <end position="213"/>
    </location>
</feature>
<feature type="compositionally biased region" description="Basic and acidic residues" evidence="2">
    <location>
        <begin position="182"/>
        <end position="195"/>
    </location>
</feature>